<name>KGUA_CAUVC</name>
<protein>
    <recommendedName>
        <fullName>Guanylate kinase</fullName>
        <ecNumber>2.7.4.8</ecNumber>
    </recommendedName>
    <alternativeName>
        <fullName>GMP kinase</fullName>
    </alternativeName>
</protein>
<gene>
    <name type="primary">gmk</name>
    <name type="ordered locus">CC_1681</name>
</gene>
<reference key="1">
    <citation type="journal article" date="2001" name="Proc. Natl. Acad. Sci. U.S.A.">
        <title>Complete genome sequence of Caulobacter crescentus.</title>
        <authorList>
            <person name="Nierman W.C."/>
            <person name="Feldblyum T.V."/>
            <person name="Laub M.T."/>
            <person name="Paulsen I.T."/>
            <person name="Nelson K.E."/>
            <person name="Eisen J.A."/>
            <person name="Heidelberg J.F."/>
            <person name="Alley M.R.K."/>
            <person name="Ohta N."/>
            <person name="Maddock J.R."/>
            <person name="Potocka I."/>
            <person name="Nelson W.C."/>
            <person name="Newton A."/>
            <person name="Stephens C."/>
            <person name="Phadke N.D."/>
            <person name="Ely B."/>
            <person name="DeBoy R.T."/>
            <person name="Dodson R.J."/>
            <person name="Durkin A.S."/>
            <person name="Gwinn M.L."/>
            <person name="Haft D.H."/>
            <person name="Kolonay J.F."/>
            <person name="Smit J."/>
            <person name="Craven M.B."/>
            <person name="Khouri H.M."/>
            <person name="Shetty J."/>
            <person name="Berry K.J."/>
            <person name="Utterback T.R."/>
            <person name="Tran K."/>
            <person name="Wolf A.M."/>
            <person name="Vamathevan J.J."/>
            <person name="Ermolaeva M.D."/>
            <person name="White O."/>
            <person name="Salzberg S.L."/>
            <person name="Venter J.C."/>
            <person name="Shapiro L."/>
            <person name="Fraser C.M."/>
        </authorList>
    </citation>
    <scope>NUCLEOTIDE SEQUENCE [LARGE SCALE GENOMIC DNA]</scope>
    <source>
        <strain>ATCC 19089 / CIP 103742 / CB 15</strain>
    </source>
</reference>
<dbReference type="EC" id="2.7.4.8"/>
<dbReference type="EMBL" id="AE005673">
    <property type="protein sequence ID" value="AAK23659.1"/>
    <property type="molecule type" value="Genomic_DNA"/>
</dbReference>
<dbReference type="PIR" id="G87457">
    <property type="entry name" value="G87457"/>
</dbReference>
<dbReference type="RefSeq" id="NP_420491.1">
    <property type="nucleotide sequence ID" value="NC_002696.2"/>
</dbReference>
<dbReference type="RefSeq" id="WP_010919552.1">
    <property type="nucleotide sequence ID" value="NC_002696.2"/>
</dbReference>
<dbReference type="SMR" id="Q9A7N9"/>
<dbReference type="STRING" id="190650.CC_1681"/>
<dbReference type="EnsemblBacteria" id="AAK23659">
    <property type="protein sequence ID" value="AAK23659"/>
    <property type="gene ID" value="CC_1681"/>
</dbReference>
<dbReference type="KEGG" id="ccr:CC_1681"/>
<dbReference type="PATRIC" id="fig|190650.5.peg.1710"/>
<dbReference type="eggNOG" id="COG0194">
    <property type="taxonomic scope" value="Bacteria"/>
</dbReference>
<dbReference type="HOGENOM" id="CLU_001715_1_0_5"/>
<dbReference type="BioCyc" id="CAULO:CC1681-MONOMER"/>
<dbReference type="Proteomes" id="UP000001816">
    <property type="component" value="Chromosome"/>
</dbReference>
<dbReference type="GO" id="GO:0005829">
    <property type="term" value="C:cytosol"/>
    <property type="evidence" value="ECO:0007669"/>
    <property type="project" value="TreeGrafter"/>
</dbReference>
<dbReference type="GO" id="GO:0005524">
    <property type="term" value="F:ATP binding"/>
    <property type="evidence" value="ECO:0007669"/>
    <property type="project" value="UniProtKB-UniRule"/>
</dbReference>
<dbReference type="GO" id="GO:0004385">
    <property type="term" value="F:guanylate kinase activity"/>
    <property type="evidence" value="ECO:0007669"/>
    <property type="project" value="UniProtKB-UniRule"/>
</dbReference>
<dbReference type="CDD" id="cd00071">
    <property type="entry name" value="GMPK"/>
    <property type="match status" value="1"/>
</dbReference>
<dbReference type="FunFam" id="3.30.63.10:FF:000002">
    <property type="entry name" value="Guanylate kinase 1"/>
    <property type="match status" value="1"/>
</dbReference>
<dbReference type="Gene3D" id="3.30.63.10">
    <property type="entry name" value="Guanylate Kinase phosphate binding domain"/>
    <property type="match status" value="1"/>
</dbReference>
<dbReference type="Gene3D" id="3.40.50.300">
    <property type="entry name" value="P-loop containing nucleotide triphosphate hydrolases"/>
    <property type="match status" value="1"/>
</dbReference>
<dbReference type="HAMAP" id="MF_00328">
    <property type="entry name" value="Guanylate_kinase"/>
    <property type="match status" value="1"/>
</dbReference>
<dbReference type="InterPro" id="IPR008145">
    <property type="entry name" value="GK/Ca_channel_bsu"/>
</dbReference>
<dbReference type="InterPro" id="IPR008144">
    <property type="entry name" value="Guanylate_kin-like_dom"/>
</dbReference>
<dbReference type="InterPro" id="IPR017665">
    <property type="entry name" value="Guanylate_kinase"/>
</dbReference>
<dbReference type="InterPro" id="IPR020590">
    <property type="entry name" value="Guanylate_kinase_CS"/>
</dbReference>
<dbReference type="InterPro" id="IPR027417">
    <property type="entry name" value="P-loop_NTPase"/>
</dbReference>
<dbReference type="NCBIfam" id="TIGR03263">
    <property type="entry name" value="guanyl_kin"/>
    <property type="match status" value="1"/>
</dbReference>
<dbReference type="PANTHER" id="PTHR23117:SF13">
    <property type="entry name" value="GUANYLATE KINASE"/>
    <property type="match status" value="1"/>
</dbReference>
<dbReference type="PANTHER" id="PTHR23117">
    <property type="entry name" value="GUANYLATE KINASE-RELATED"/>
    <property type="match status" value="1"/>
</dbReference>
<dbReference type="Pfam" id="PF00625">
    <property type="entry name" value="Guanylate_kin"/>
    <property type="match status" value="1"/>
</dbReference>
<dbReference type="SMART" id="SM00072">
    <property type="entry name" value="GuKc"/>
    <property type="match status" value="1"/>
</dbReference>
<dbReference type="SUPFAM" id="SSF52540">
    <property type="entry name" value="P-loop containing nucleoside triphosphate hydrolases"/>
    <property type="match status" value="1"/>
</dbReference>
<dbReference type="PROSITE" id="PS00856">
    <property type="entry name" value="GUANYLATE_KINASE_1"/>
    <property type="match status" value="1"/>
</dbReference>
<dbReference type="PROSITE" id="PS50052">
    <property type="entry name" value="GUANYLATE_KINASE_2"/>
    <property type="match status" value="1"/>
</dbReference>
<feature type="chain" id="PRO_0000170517" description="Guanylate kinase">
    <location>
        <begin position="1"/>
        <end position="213"/>
    </location>
</feature>
<feature type="domain" description="Guanylate kinase-like">
    <location>
        <begin position="10"/>
        <end position="189"/>
    </location>
</feature>
<feature type="binding site" evidence="1">
    <location>
        <begin position="17"/>
        <end position="24"/>
    </location>
    <ligand>
        <name>ATP</name>
        <dbReference type="ChEBI" id="CHEBI:30616"/>
    </ligand>
</feature>
<evidence type="ECO:0000250" key="1"/>
<evidence type="ECO:0000305" key="2"/>
<comment type="function">
    <text evidence="1">Essential for recycling GMP and indirectly, cGMP.</text>
</comment>
<comment type="catalytic activity">
    <reaction>
        <text>GMP + ATP = GDP + ADP</text>
        <dbReference type="Rhea" id="RHEA:20780"/>
        <dbReference type="ChEBI" id="CHEBI:30616"/>
        <dbReference type="ChEBI" id="CHEBI:58115"/>
        <dbReference type="ChEBI" id="CHEBI:58189"/>
        <dbReference type="ChEBI" id="CHEBI:456216"/>
        <dbReference type="EC" id="2.7.4.8"/>
    </reaction>
</comment>
<comment type="subcellular location">
    <subcellularLocation>
        <location evidence="1">Cytoplasm</location>
    </subcellularLocation>
</comment>
<comment type="similarity">
    <text evidence="2">Belongs to the guanylate kinase family.</text>
</comment>
<keyword id="KW-0067">ATP-binding</keyword>
<keyword id="KW-0963">Cytoplasm</keyword>
<keyword id="KW-0418">Kinase</keyword>
<keyword id="KW-0547">Nucleotide-binding</keyword>
<keyword id="KW-1185">Reference proteome</keyword>
<keyword id="KW-0808">Transferase</keyword>
<organism>
    <name type="scientific">Caulobacter vibrioides (strain ATCC 19089 / CIP 103742 / CB 15)</name>
    <name type="common">Caulobacter crescentus</name>
    <dbReference type="NCBI Taxonomy" id="190650"/>
    <lineage>
        <taxon>Bacteria</taxon>
        <taxon>Pseudomonadati</taxon>
        <taxon>Pseudomonadota</taxon>
        <taxon>Alphaproteobacteria</taxon>
        <taxon>Caulobacterales</taxon>
        <taxon>Caulobacteraceae</taxon>
        <taxon>Caulobacter</taxon>
    </lineage>
</organism>
<proteinExistence type="inferred from homology"/>
<sequence>MNKSHHPHRGLLLMVVAPSGVGKTSLTRRLVSDHGDLHLSISATTRDPRPGEHDGRDYHFVSRDKFQGMLAEDAFLEWAEVYGNFYGSPKAPIMDALSRGESVLFDIDFQGAMKVHKQAGADSVLVYILPPSLAEMSRRLHTRSQDSEEVIHRRLSRAKDEVAAWEQFDYVILNDDFDRAYADLAHIYHAERLKRARNPWIGDLVSDLLKEEI</sequence>
<accession>Q9A7N9</accession>